<accession>Q9EST6</accession>
<protein>
    <recommendedName>
        <fullName>Acidic leucine-rich nuclear phosphoprotein 32 family member B</fullName>
    </recommendedName>
    <alternativeName>
        <fullName>Proliferation-related acidic leucine-rich protein PAL31</fullName>
    </alternativeName>
</protein>
<comment type="function">
    <text evidence="2 3 6 7">Multifunctional protein that is involved in the regulation of many processes including cell proliferation, apoptosis, cell cycle progression or transcription. Regulates the proliferation of neuronal stem cells, differentiation of leukemic cells and progression from G1 to S phase of the cell cycle (PubMed:11162633). As negative regulator of caspase-3-dependent apoptosis, may act as an antagonist of ANP32A in regulating tissue homeostasis (PubMed:16499868). Exhibits histone chaperone properties, able to recruit histones to certain promoters, thus regulating the transcription of specific genes. Also plays an essential role in the nucleocytoplasmic transport of specific mRNAs via the uncommon nuclear mRNA export receptor XPO1/CRM1 (By similarity). Participates in the regulation of adequate adaptive immune responses by acting on mRNA expression and cell proliferation (By similarity).</text>
</comment>
<comment type="subunit">
    <text evidence="2">Interacts with histones H3 and H4. Interacts with KLF5; this interaction induces promoter region-specific histone incorporation and inhibition of histone acetylation by ANP32B.</text>
</comment>
<comment type="subcellular location">
    <subcellularLocation>
        <location evidence="5 6">Nucleus</location>
    </subcellularLocation>
    <text>Accumulates in the nuclei at the S phase.</text>
</comment>
<comment type="tissue specificity">
    <text evidence="5">Predominantly expressed in brain. Expressed in the entire embryonic brain, whereas in the adult brain its expression is restricted to the subventricular zone where there are neural progenitor cells.</text>
</comment>
<comment type="induction">
    <text>Expressed specifically during the late G1 and S phases.</text>
</comment>
<comment type="domain">
    <text evidence="1">Histone binding is mediated by the concave surface of the LRR region.</text>
</comment>
<comment type="PTM">
    <text evidence="1">Some glutamate residues are glycylated by TTLL8. This modification occurs exclusively on glutamate residues and results in a glycine chain on the gamma-carboxyl group (By similarity).</text>
</comment>
<comment type="PTM">
    <text evidence="2">Directly cleaved by caspase-3/CASP3.</text>
</comment>
<comment type="miscellaneous">
    <text>Suppression of the expression of this gene by RNAi induces apoptosis.</text>
</comment>
<comment type="similarity">
    <text evidence="8">Belongs to the ANP32 family.</text>
</comment>
<sequence length="272" mass="31061">MDMKRRIHLELRNRTPAAVQELVLDNCKANDGKIEGLTDEFVNLEFLSLINVGLFSVSDLPKLPKLKKLELSENRIFGGLDRLAEELPSLTHLNLSGNNLKDISTLEPLKRLDCLKSLDLFGCEVTNRSDYRETVFRLLPQLSYLDGYDREDQEAPDSDVEVDSVEEAPDSDGEVDGVDKEEEDEEGEDEEEEEDEDGEEEEDEDEEDEDEDEDVEGEDDEDEVSGEEEEFGHDGEVDEDEEDEDEDEDEEEEESGKGEKRKRETDDEGEDD</sequence>
<gene>
    <name type="primary">Anp32b</name>
    <name type="synonym">Pal31</name>
</gene>
<keyword id="KW-0143">Chaperone</keyword>
<keyword id="KW-0433">Leucine-rich repeat</keyword>
<keyword id="KW-0539">Nucleus</keyword>
<keyword id="KW-0597">Phosphoprotein</keyword>
<keyword id="KW-1185">Reference proteome</keyword>
<keyword id="KW-0677">Repeat</keyword>
<organism>
    <name type="scientific">Rattus norvegicus</name>
    <name type="common">Rat</name>
    <dbReference type="NCBI Taxonomy" id="10116"/>
    <lineage>
        <taxon>Eukaryota</taxon>
        <taxon>Metazoa</taxon>
        <taxon>Chordata</taxon>
        <taxon>Craniata</taxon>
        <taxon>Vertebrata</taxon>
        <taxon>Euteleostomi</taxon>
        <taxon>Mammalia</taxon>
        <taxon>Eutheria</taxon>
        <taxon>Euarchontoglires</taxon>
        <taxon>Glires</taxon>
        <taxon>Rodentia</taxon>
        <taxon>Myomorpha</taxon>
        <taxon>Muroidea</taxon>
        <taxon>Muridae</taxon>
        <taxon>Murinae</taxon>
        <taxon>Rattus</taxon>
    </lineage>
</organism>
<dbReference type="EMBL" id="AB025581">
    <property type="protein sequence ID" value="BAB12435.1"/>
    <property type="molecule type" value="mRNA"/>
</dbReference>
<dbReference type="EMBL" id="BC086508">
    <property type="protein sequence ID" value="AAH86508.1"/>
    <property type="molecule type" value="mRNA"/>
</dbReference>
<dbReference type="PIR" id="JC7357">
    <property type="entry name" value="JC7357"/>
</dbReference>
<dbReference type="RefSeq" id="NP_571986.1">
    <property type="nucleotide sequence ID" value="NM_131911.2"/>
</dbReference>
<dbReference type="SMR" id="Q9EST6"/>
<dbReference type="BioGRID" id="250983">
    <property type="interactions" value="2"/>
</dbReference>
<dbReference type="FunCoup" id="Q9EST6">
    <property type="interactions" value="3085"/>
</dbReference>
<dbReference type="IntAct" id="Q9EST6">
    <property type="interactions" value="1"/>
</dbReference>
<dbReference type="MINT" id="Q9EST6"/>
<dbReference type="STRING" id="10116.ENSRNOP00000012478"/>
<dbReference type="iPTMnet" id="Q9EST6"/>
<dbReference type="PhosphoSitePlus" id="Q9EST6"/>
<dbReference type="SwissPalm" id="Q9EST6"/>
<dbReference type="jPOST" id="Q9EST6"/>
<dbReference type="PaxDb" id="10116-ENSRNOP00000012478"/>
<dbReference type="Ensembl" id="ENSRNOT00000012478.6">
    <property type="protein sequence ID" value="ENSRNOP00000012478.5"/>
    <property type="gene ID" value="ENSRNOG00000009266.7"/>
</dbReference>
<dbReference type="GeneID" id="170724"/>
<dbReference type="KEGG" id="rno:170724"/>
<dbReference type="UCSC" id="RGD:621285">
    <property type="organism name" value="rat"/>
</dbReference>
<dbReference type="AGR" id="RGD:621285"/>
<dbReference type="CTD" id="10541"/>
<dbReference type="RGD" id="621285">
    <property type="gene designation" value="Anp32b"/>
</dbReference>
<dbReference type="eggNOG" id="KOG2739">
    <property type="taxonomic scope" value="Eukaryota"/>
</dbReference>
<dbReference type="GeneTree" id="ENSGT00950000182907"/>
<dbReference type="InParanoid" id="Q9EST6"/>
<dbReference type="OrthoDB" id="2160613at2759"/>
<dbReference type="PhylomeDB" id="Q9EST6"/>
<dbReference type="PRO" id="PR:Q9EST6"/>
<dbReference type="Proteomes" id="UP000002494">
    <property type="component" value="Chromosome 5"/>
</dbReference>
<dbReference type="GO" id="GO:0005737">
    <property type="term" value="C:cytoplasm"/>
    <property type="evidence" value="ECO:0000266"/>
    <property type="project" value="RGD"/>
</dbReference>
<dbReference type="GO" id="GO:0005730">
    <property type="term" value="C:nucleolus"/>
    <property type="evidence" value="ECO:0000266"/>
    <property type="project" value="RGD"/>
</dbReference>
<dbReference type="GO" id="GO:0005634">
    <property type="term" value="C:nucleus"/>
    <property type="evidence" value="ECO:0000266"/>
    <property type="project" value="RGD"/>
</dbReference>
<dbReference type="GO" id="GO:0042393">
    <property type="term" value="F:histone binding"/>
    <property type="evidence" value="ECO:0000266"/>
    <property type="project" value="RGD"/>
</dbReference>
<dbReference type="GO" id="GO:0070063">
    <property type="term" value="F:RNA polymerase binding"/>
    <property type="evidence" value="ECO:0000266"/>
    <property type="project" value="RGD"/>
</dbReference>
<dbReference type="GO" id="GO:0048839">
    <property type="term" value="P:inner ear development"/>
    <property type="evidence" value="ECO:0000266"/>
    <property type="project" value="RGD"/>
</dbReference>
<dbReference type="GO" id="GO:0043066">
    <property type="term" value="P:negative regulation of apoptotic process"/>
    <property type="evidence" value="ECO:0000315"/>
    <property type="project" value="RGD"/>
</dbReference>
<dbReference type="GO" id="GO:0045596">
    <property type="term" value="P:negative regulation of cell differentiation"/>
    <property type="evidence" value="ECO:0000266"/>
    <property type="project" value="RGD"/>
</dbReference>
<dbReference type="GO" id="GO:0006334">
    <property type="term" value="P:nucleosome assembly"/>
    <property type="evidence" value="ECO:0000266"/>
    <property type="project" value="RGD"/>
</dbReference>
<dbReference type="GO" id="GO:0008284">
    <property type="term" value="P:positive regulation of cell population proliferation"/>
    <property type="evidence" value="ECO:0000315"/>
    <property type="project" value="RGD"/>
</dbReference>
<dbReference type="GO" id="GO:1900087">
    <property type="term" value="P:positive regulation of G1/S transition of mitotic cell cycle"/>
    <property type="evidence" value="ECO:0000315"/>
    <property type="project" value="RGD"/>
</dbReference>
<dbReference type="GO" id="GO:0046827">
    <property type="term" value="P:positive regulation of protein export from nucleus"/>
    <property type="evidence" value="ECO:0000266"/>
    <property type="project" value="RGD"/>
</dbReference>
<dbReference type="GO" id="GO:0042981">
    <property type="term" value="P:regulation of apoptotic process"/>
    <property type="evidence" value="ECO:0000318"/>
    <property type="project" value="GO_Central"/>
</dbReference>
<dbReference type="GO" id="GO:0060021">
    <property type="term" value="P:roof of mouth development"/>
    <property type="evidence" value="ECO:0000266"/>
    <property type="project" value="RGD"/>
</dbReference>
<dbReference type="GO" id="GO:0001944">
    <property type="term" value="P:vasculature development"/>
    <property type="evidence" value="ECO:0000266"/>
    <property type="project" value="RGD"/>
</dbReference>
<dbReference type="GO" id="GO:0021591">
    <property type="term" value="P:ventricular system development"/>
    <property type="evidence" value="ECO:0000266"/>
    <property type="project" value="RGD"/>
</dbReference>
<dbReference type="FunFam" id="3.80.10.10:FF:000003">
    <property type="entry name" value="Acidic leucine-rich nuclear phosphoprotein 32 family member A"/>
    <property type="match status" value="1"/>
</dbReference>
<dbReference type="Gene3D" id="3.80.10.10">
    <property type="entry name" value="Ribonuclease Inhibitor"/>
    <property type="match status" value="1"/>
</dbReference>
<dbReference type="InterPro" id="IPR045081">
    <property type="entry name" value="AN32"/>
</dbReference>
<dbReference type="InterPro" id="IPR001611">
    <property type="entry name" value="Leu-rich_rpt"/>
</dbReference>
<dbReference type="InterPro" id="IPR032675">
    <property type="entry name" value="LRR_dom_sf"/>
</dbReference>
<dbReference type="InterPro" id="IPR003603">
    <property type="entry name" value="U2A'_phosphoprotein32A_C"/>
</dbReference>
<dbReference type="PANTHER" id="PTHR11375">
    <property type="entry name" value="ACIDIC LEUCINE-RICH NUCLEAR PHOSPHOPROTEIN 32"/>
    <property type="match status" value="1"/>
</dbReference>
<dbReference type="PANTHER" id="PTHR11375:SF2">
    <property type="entry name" value="ACIDIC LEUCINE-RICH NUCLEAR PHOSPHOPROTEIN 32 FAMILY MEMBER B"/>
    <property type="match status" value="1"/>
</dbReference>
<dbReference type="Pfam" id="PF14580">
    <property type="entry name" value="LRR_9"/>
    <property type="match status" value="1"/>
</dbReference>
<dbReference type="SMART" id="SM00446">
    <property type="entry name" value="LRRcap"/>
    <property type="match status" value="1"/>
</dbReference>
<dbReference type="SUPFAM" id="SSF52058">
    <property type="entry name" value="L domain-like"/>
    <property type="match status" value="1"/>
</dbReference>
<dbReference type="PROSITE" id="PS51450">
    <property type="entry name" value="LRR"/>
    <property type="match status" value="3"/>
</dbReference>
<evidence type="ECO:0000250" key="1"/>
<evidence type="ECO:0000250" key="2">
    <source>
        <dbReference type="UniProtKB" id="Q92688"/>
    </source>
</evidence>
<evidence type="ECO:0000250" key="3">
    <source>
        <dbReference type="UniProtKB" id="Q9EST5"/>
    </source>
</evidence>
<evidence type="ECO:0000256" key="4">
    <source>
        <dbReference type="SAM" id="MobiDB-lite"/>
    </source>
</evidence>
<evidence type="ECO:0000269" key="5">
    <source>
    </source>
</evidence>
<evidence type="ECO:0000269" key="6">
    <source>
    </source>
</evidence>
<evidence type="ECO:0000269" key="7">
    <source>
    </source>
</evidence>
<evidence type="ECO:0000305" key="8"/>
<evidence type="ECO:0007744" key="9">
    <source>
    </source>
</evidence>
<reference key="1">
    <citation type="journal article" date="2000" name="Biochem. Biophys. Res. Commun.">
        <title>PAL31, a novel nuclear protein, expressed in the developing brain.</title>
        <authorList>
            <person name="Mutai H."/>
            <person name="Toyoshima Y."/>
            <person name="Sun W."/>
            <person name="Hattori N."/>
            <person name="Tanaka S."/>
            <person name="Shiota K."/>
        </authorList>
    </citation>
    <scope>NUCLEOTIDE SEQUENCE [MRNA]</scope>
    <scope>SUBCELLULAR LOCATION</scope>
    <scope>TISSUE SPECIFICITY</scope>
    <source>
        <strain>Wistar Imamichi</strain>
        <tissue>Brain</tissue>
    </source>
</reference>
<reference key="2">
    <citation type="journal article" date="2004" name="Genome Res.">
        <title>The status, quality, and expansion of the NIH full-length cDNA project: the Mammalian Gene Collection (MGC).</title>
        <authorList>
            <consortium name="The MGC Project Team"/>
        </authorList>
    </citation>
    <scope>NUCLEOTIDE SEQUENCE [LARGE SCALE MRNA]</scope>
    <source>
        <tissue>Heart</tissue>
    </source>
</reference>
<reference key="3">
    <citation type="journal article" date="2001" name="Biochem. Biophys. Res. Commun.">
        <title>PAL31, a nuclear protein required for progression to the S phase.</title>
        <authorList>
            <person name="Sun W."/>
            <person name="Hattori N."/>
            <person name="Mutai H."/>
            <person name="Toyoshima Y."/>
            <person name="Kimura H."/>
            <person name="Tanaka S."/>
            <person name="Shiota K."/>
        </authorList>
    </citation>
    <scope>FUNCTION</scope>
    <scope>SUBCELLULAR LOCATION</scope>
</reference>
<reference key="4">
    <citation type="journal article" date="2006" name="Biochem. Biophys. Res. Commun.">
        <title>Proliferation related acidic leucine-rich protein PAL31 functions as a caspase-3 inhibitor.</title>
        <authorList>
            <person name="Sun W."/>
            <person name="Kimura H."/>
            <person name="Hattori N."/>
            <person name="Tanaka S."/>
            <person name="Matsuyama S."/>
            <person name="Shiota K."/>
        </authorList>
    </citation>
    <scope>FUNCTION</scope>
</reference>
<reference key="5">
    <citation type="journal article" date="2005" name="Cerebellum">
        <title>The Anp32 family of proteins containing leucine-rich repeats.</title>
        <authorList>
            <person name="Matilla A."/>
            <person name="Radrizzani M."/>
        </authorList>
    </citation>
    <scope>GENE FAMILY</scope>
    <scope>NOMENCLATURE</scope>
</reference>
<reference key="6">
    <citation type="journal article" date="2012" name="Nat. Commun.">
        <title>Quantitative maps of protein phosphorylation sites across 14 different rat organs and tissues.</title>
        <authorList>
            <person name="Lundby A."/>
            <person name="Secher A."/>
            <person name="Lage K."/>
            <person name="Nordsborg N.B."/>
            <person name="Dmytriyev A."/>
            <person name="Lundby C."/>
            <person name="Olsen J.V."/>
        </authorList>
    </citation>
    <scope>PHOSPHORYLATION [LARGE SCALE ANALYSIS] AT SER-164; SER-171 AND THR-265</scope>
    <scope>IDENTIFICATION BY MASS SPECTROMETRY [LARGE SCALE ANALYSIS]</scope>
</reference>
<proteinExistence type="evidence at protein level"/>
<feature type="chain" id="PRO_0000236253" description="Acidic leucine-rich nuclear phosphoprotein 32 family member B">
    <location>
        <begin position="1"/>
        <end position="272"/>
    </location>
</feature>
<feature type="repeat" description="LRR 1">
    <location>
        <begin position="16"/>
        <end position="40"/>
    </location>
</feature>
<feature type="repeat" description="LRR 2">
    <location>
        <begin position="43"/>
        <end position="64"/>
    </location>
</feature>
<feature type="repeat" description="LRR 3">
    <location>
        <begin position="65"/>
        <end position="84"/>
    </location>
</feature>
<feature type="repeat" description="LRR 4">
    <location>
        <begin position="89"/>
        <end position="110"/>
    </location>
</feature>
<feature type="domain" description="LRRCT">
    <location>
        <begin position="123"/>
        <end position="161"/>
    </location>
</feature>
<feature type="region of interest" description="Disordered" evidence="4">
    <location>
        <begin position="149"/>
        <end position="272"/>
    </location>
</feature>
<feature type="short sequence motif" description="Nuclear localization signal" evidence="2">
    <location>
        <begin position="260"/>
        <end position="263"/>
    </location>
</feature>
<feature type="compositionally biased region" description="Acidic residues" evidence="4">
    <location>
        <begin position="149"/>
        <end position="254"/>
    </location>
</feature>
<feature type="compositionally biased region" description="Basic and acidic residues" evidence="4">
    <location>
        <begin position="255"/>
        <end position="265"/>
    </location>
</feature>
<feature type="modified residue" description="Phosphoserine" evidence="9">
    <location>
        <position position="164"/>
    </location>
</feature>
<feature type="modified residue" description="Phosphoserine" evidence="9">
    <location>
        <position position="171"/>
    </location>
</feature>
<feature type="modified residue" description="Phosphothreonine" evidence="9">
    <location>
        <position position="265"/>
    </location>
</feature>
<name>AN32B_RAT</name>